<feature type="initiator methionine" description="Removed" evidence="1">
    <location>
        <position position="1"/>
    </location>
</feature>
<feature type="chain" id="PRO_0000083973" description="Hypoxia-inducible factor 1-alpha inhibitor">
    <location>
        <begin position="2"/>
        <end position="344"/>
    </location>
</feature>
<feature type="domain" description="JmjC" evidence="2">
    <location>
        <begin position="133"/>
        <end position="303"/>
    </location>
</feature>
<feature type="binding site" evidence="1">
    <location>
        <position position="136"/>
    </location>
    <ligand>
        <name>2-oxoglutarate</name>
        <dbReference type="ChEBI" id="CHEBI:16810"/>
    </ligand>
</feature>
<feature type="binding site" evidence="1">
    <location>
        <position position="143"/>
    </location>
    <ligand>
        <name>substrate</name>
    </ligand>
</feature>
<feature type="binding site" evidence="1">
    <location>
        <begin position="173"/>
        <end position="174"/>
    </location>
    <ligand>
        <name>substrate</name>
    </ligand>
</feature>
<feature type="binding site" evidence="1">
    <location>
        <position position="187"/>
    </location>
    <ligand>
        <name>2-oxoglutarate</name>
        <dbReference type="ChEBI" id="CHEBI:16810"/>
    </ligand>
</feature>
<feature type="binding site" evidence="1">
    <location>
        <position position="190"/>
    </location>
    <ligand>
        <name>Fe cation</name>
        <dbReference type="ChEBI" id="CHEBI:24875"/>
        <note>catalytic</note>
    </ligand>
</feature>
<feature type="binding site" evidence="1">
    <location>
        <begin position="192"/>
        <end position="194"/>
    </location>
    <ligand>
        <name>substrate</name>
    </ligand>
</feature>
<feature type="binding site" evidence="1">
    <location>
        <position position="192"/>
    </location>
    <ligand>
        <name>Fe cation</name>
        <dbReference type="ChEBI" id="CHEBI:24875"/>
        <note>catalytic</note>
    </ligand>
</feature>
<feature type="binding site" evidence="1">
    <location>
        <position position="196"/>
    </location>
    <ligand>
        <name>2-oxoglutarate</name>
        <dbReference type="ChEBI" id="CHEBI:16810"/>
    </ligand>
</feature>
<feature type="binding site" evidence="1">
    <location>
        <position position="205"/>
    </location>
    <ligand>
        <name>2-oxoglutarate</name>
        <dbReference type="ChEBI" id="CHEBI:16810"/>
    </ligand>
</feature>
<feature type="binding site" evidence="1">
    <location>
        <begin position="229"/>
        <end position="230"/>
    </location>
    <ligand>
        <name>substrate</name>
    </ligand>
</feature>
<feature type="binding site" evidence="1">
    <location>
        <position position="270"/>
    </location>
    <ligand>
        <name>Fe cation</name>
        <dbReference type="ChEBI" id="CHEBI:24875"/>
        <note>catalytic</note>
    </ligand>
</feature>
<feature type="binding site" evidence="1">
    <location>
        <position position="285"/>
    </location>
    <ligand>
        <name>2-oxoglutarate</name>
        <dbReference type="ChEBI" id="CHEBI:16810"/>
    </ligand>
</feature>
<feature type="binding site" evidence="1">
    <location>
        <position position="291"/>
    </location>
    <ligand>
        <name>substrate</name>
    </ligand>
</feature>
<feature type="binding site" evidence="1">
    <location>
        <position position="312"/>
    </location>
    <ligand>
        <name>substrate</name>
    </ligand>
</feature>
<feature type="site" description="Important for dimer formation" evidence="1">
    <location>
        <position position="331"/>
    </location>
</feature>
<feature type="modified residue" description="N-acetylalanine" evidence="1">
    <location>
        <position position="2"/>
    </location>
</feature>
<feature type="sequence conflict" description="In Ref. 2; AAH44475." evidence="3" ref="2">
    <original>D</original>
    <variation>G</variation>
    <location>
        <position position="17"/>
    </location>
</feature>
<feature type="sequence conflict" description="In Ref. 2; AAH44475." evidence="3" ref="2">
    <original>E</original>
    <variation>G</variation>
    <location>
        <position position="20"/>
    </location>
</feature>
<feature type="sequence conflict" description="In Ref. 2; AAH44475." evidence="3" ref="2">
    <original>D</original>
    <variation>E</variation>
    <location>
        <position position="213"/>
    </location>
</feature>
<organism>
    <name type="scientific">Danio rerio</name>
    <name type="common">Zebrafish</name>
    <name type="synonym">Brachydanio rerio</name>
    <dbReference type="NCBI Taxonomy" id="7955"/>
    <lineage>
        <taxon>Eukaryota</taxon>
        <taxon>Metazoa</taxon>
        <taxon>Chordata</taxon>
        <taxon>Craniata</taxon>
        <taxon>Vertebrata</taxon>
        <taxon>Euteleostomi</taxon>
        <taxon>Actinopterygii</taxon>
        <taxon>Neopterygii</taxon>
        <taxon>Teleostei</taxon>
        <taxon>Ostariophysi</taxon>
        <taxon>Cypriniformes</taxon>
        <taxon>Danionidae</taxon>
        <taxon>Danioninae</taxon>
        <taxon>Danio</taxon>
    </lineage>
</organism>
<sequence length="344" mass="39992">MAETDGAAAFTELRDPDWDESQLRQYTFPTRQIPRLSHTDPRAEVLINNEEPVVLTDTSLVYPALKWDIPYLQENIGNGDFSVYIAENHKFLYYDEKKMVNFQDFVPKSRRIEMKFSEFVDKMHQTEEQGGKGRVYLQQTLNDTVGRKIVVDFLGFNWNWINKQQAKRNWGPLTSNLLLIGMEGNVTPAHYDEQQNFFAQIKGHKRCILFPPDQFDCLYPYPVHHPCDRQSQVDFENPDYDKFPNFKNAVGYEAVVGPGDVLYIPMYWWHHIESLLNGGETITVNFWYKGAPTPKRIEYPLKAHQKVAIMRNIEKMLGEALGDPHEVGPLLNMMIKGRYDHGLS</sequence>
<protein>
    <recommendedName>
        <fullName>Hypoxia-inducible factor 1-alpha inhibitor</fullName>
        <ecNumber>1.14.11.30</ecNumber>
        <ecNumber>1.14.11.n4</ecNumber>
    </recommendedName>
    <alternativeName>
        <fullName>Hypoxia-inducible factor asparagine hydroxylase</fullName>
    </alternativeName>
</protein>
<accession>P59723</accession>
<accession>B8A5K4</accession>
<dbReference type="EC" id="1.14.11.30"/>
<dbReference type="EC" id="1.14.11.n4"/>
<dbReference type="EMBL" id="BX548172">
    <property type="protein sequence ID" value="CAX13993.1"/>
    <property type="molecule type" value="Genomic_DNA"/>
</dbReference>
<dbReference type="EMBL" id="BC044475">
    <property type="protein sequence ID" value="AAH44475.1"/>
    <property type="molecule type" value="mRNA"/>
</dbReference>
<dbReference type="RefSeq" id="NP_958904.1">
    <property type="nucleotide sequence ID" value="NM_201496.1"/>
</dbReference>
<dbReference type="SMR" id="P59723"/>
<dbReference type="BioGRID" id="88738">
    <property type="interactions" value="3"/>
</dbReference>
<dbReference type="FunCoup" id="P59723">
    <property type="interactions" value="615"/>
</dbReference>
<dbReference type="STRING" id="7955.ENSDARP00000042048"/>
<dbReference type="PaxDb" id="7955-ENSDARP00000042048"/>
<dbReference type="Ensembl" id="ENSDART00000042049">
    <property type="protein sequence ID" value="ENSDARP00000042048"/>
    <property type="gene ID" value="ENSDARG00000031915"/>
</dbReference>
<dbReference type="GeneID" id="373126"/>
<dbReference type="KEGG" id="dre:373126"/>
<dbReference type="AGR" id="ZFIN:ZDB-GENE-030826-19"/>
<dbReference type="CTD" id="55662"/>
<dbReference type="ZFIN" id="ZDB-GENE-030826-19">
    <property type="gene designation" value="hif1an"/>
</dbReference>
<dbReference type="eggNOG" id="KOG2132">
    <property type="taxonomic scope" value="Eukaryota"/>
</dbReference>
<dbReference type="HOGENOM" id="CLU_016785_3_0_1"/>
<dbReference type="InParanoid" id="P59723"/>
<dbReference type="OMA" id="QNIVGYE"/>
<dbReference type="OrthoDB" id="47172at2759"/>
<dbReference type="TreeFam" id="TF329609"/>
<dbReference type="Reactome" id="R-DRE-1234174">
    <property type="pathway name" value="Cellular response to hypoxia"/>
</dbReference>
<dbReference type="PRO" id="PR:P59723"/>
<dbReference type="Proteomes" id="UP000000437">
    <property type="component" value="Chromosome 13"/>
</dbReference>
<dbReference type="Bgee" id="ENSDARG00000031915">
    <property type="expression patterns" value="Expressed in early embryo and 40 other cell types or tissues"/>
</dbReference>
<dbReference type="GO" id="GO:0005737">
    <property type="term" value="C:cytoplasm"/>
    <property type="evidence" value="ECO:0000250"/>
    <property type="project" value="UniProtKB"/>
</dbReference>
<dbReference type="GO" id="GO:0005634">
    <property type="term" value="C:nucleus"/>
    <property type="evidence" value="ECO:0000318"/>
    <property type="project" value="GO_Central"/>
</dbReference>
<dbReference type="GO" id="GO:0048471">
    <property type="term" value="C:perinuclear region of cytoplasm"/>
    <property type="evidence" value="ECO:0000250"/>
    <property type="project" value="UniProtKB"/>
</dbReference>
<dbReference type="GO" id="GO:0036140">
    <property type="term" value="F:[protein]-asparagine 3-dioxygenase activity"/>
    <property type="evidence" value="ECO:0000250"/>
    <property type="project" value="UniProtKB"/>
</dbReference>
<dbReference type="GO" id="GO:0031406">
    <property type="term" value="F:carboxylic acid binding"/>
    <property type="evidence" value="ECO:0000250"/>
    <property type="project" value="UniProtKB"/>
</dbReference>
<dbReference type="GO" id="GO:0008198">
    <property type="term" value="F:ferrous iron binding"/>
    <property type="evidence" value="ECO:0000250"/>
    <property type="project" value="UniProtKB"/>
</dbReference>
<dbReference type="GO" id="GO:0062101">
    <property type="term" value="F:peptidyl-aspartic acid 3-dioxygenase activity"/>
    <property type="evidence" value="ECO:0000250"/>
    <property type="project" value="UniProtKB"/>
</dbReference>
<dbReference type="GO" id="GO:0036139">
    <property type="term" value="F:peptidyl-histidine dioxygenase activity"/>
    <property type="evidence" value="ECO:0000250"/>
    <property type="project" value="UniProtKB"/>
</dbReference>
<dbReference type="GO" id="GO:0042803">
    <property type="term" value="F:protein homodimerization activity"/>
    <property type="evidence" value="ECO:0000250"/>
    <property type="project" value="UniProtKB"/>
</dbReference>
<dbReference type="GO" id="GO:0008270">
    <property type="term" value="F:zinc ion binding"/>
    <property type="evidence" value="ECO:0000250"/>
    <property type="project" value="UniProtKB"/>
</dbReference>
<dbReference type="GO" id="GO:0045746">
    <property type="term" value="P:negative regulation of Notch signaling pathway"/>
    <property type="evidence" value="ECO:0000318"/>
    <property type="project" value="GO_Central"/>
</dbReference>
<dbReference type="GO" id="GO:1901343">
    <property type="term" value="P:negative regulation of vasculature development"/>
    <property type="evidence" value="ECO:0000314"/>
    <property type="project" value="ZFIN"/>
</dbReference>
<dbReference type="GO" id="GO:0030947">
    <property type="term" value="P:regulation of vascular endothelial growth factor receptor signaling pathway"/>
    <property type="evidence" value="ECO:0000316"/>
    <property type="project" value="ZFIN"/>
</dbReference>
<dbReference type="FunFam" id="1.10.287.1010:FF:000001">
    <property type="entry name" value="Hypoxia-inducible factor 1-alpha inhibitor"/>
    <property type="match status" value="1"/>
</dbReference>
<dbReference type="FunFam" id="2.60.120.10:FF:000042">
    <property type="entry name" value="Hypoxia-inducible factor 1-alpha inhibitor"/>
    <property type="match status" value="1"/>
</dbReference>
<dbReference type="Gene3D" id="1.10.287.1010">
    <property type="entry name" value="Clavaminate synthase-like"/>
    <property type="match status" value="1"/>
</dbReference>
<dbReference type="Gene3D" id="2.60.120.10">
    <property type="entry name" value="Jelly Rolls"/>
    <property type="match status" value="1"/>
</dbReference>
<dbReference type="InterPro" id="IPR041667">
    <property type="entry name" value="Cupin_8"/>
</dbReference>
<dbReference type="InterPro" id="IPR027452">
    <property type="entry name" value="FIH-1_dom_II"/>
</dbReference>
<dbReference type="InterPro" id="IPR003347">
    <property type="entry name" value="JmjC_dom"/>
</dbReference>
<dbReference type="InterPro" id="IPR014710">
    <property type="entry name" value="RmlC-like_jellyroll"/>
</dbReference>
<dbReference type="PANTHER" id="PTHR12461">
    <property type="entry name" value="HYPOXIA-INDUCIBLE FACTOR 1 ALPHA INHIBITOR-RELATED"/>
    <property type="match status" value="1"/>
</dbReference>
<dbReference type="PANTHER" id="PTHR12461:SF105">
    <property type="entry name" value="HYPOXIA-INDUCIBLE FACTOR 1-ALPHA INHIBITOR"/>
    <property type="match status" value="1"/>
</dbReference>
<dbReference type="Pfam" id="PF13621">
    <property type="entry name" value="Cupin_8"/>
    <property type="match status" value="1"/>
</dbReference>
<dbReference type="SMART" id="SM00558">
    <property type="entry name" value="JmjC"/>
    <property type="match status" value="1"/>
</dbReference>
<dbReference type="SUPFAM" id="SSF51197">
    <property type="entry name" value="Clavaminate synthase-like"/>
    <property type="match status" value="1"/>
</dbReference>
<dbReference type="PROSITE" id="PS51184">
    <property type="entry name" value="JMJC"/>
    <property type="match status" value="1"/>
</dbReference>
<comment type="function">
    <text evidence="1">Hydroxylates a specific Asn residue in the C-terminal transactivation domain (CAD) of HIF-1 alpha. The hydroxylation prevents interaction of HIF-1 with transcriptional coactivators. Also hydroxylates specific Asn, Asp and His residues within ankyrin repeat domain-containing proteins.</text>
</comment>
<comment type="catalytic activity">
    <reaction>
        <text>L-asparaginyl-[hypoxia-inducible factor alpha subunit] + 2-oxoglutarate + O2 = (3S)-3-hydroxy-L-asparaginyl-[hypoxia-inducible factor alpha subunit] + succinate + CO2</text>
        <dbReference type="Rhea" id="RHEA:54268"/>
        <dbReference type="Rhea" id="RHEA-COMP:13833"/>
        <dbReference type="Rhea" id="RHEA-COMP:13834"/>
        <dbReference type="ChEBI" id="CHEBI:15379"/>
        <dbReference type="ChEBI" id="CHEBI:16526"/>
        <dbReference type="ChEBI" id="CHEBI:16810"/>
        <dbReference type="ChEBI" id="CHEBI:30031"/>
        <dbReference type="ChEBI" id="CHEBI:50347"/>
        <dbReference type="ChEBI" id="CHEBI:138107"/>
        <dbReference type="EC" id="1.14.11.30"/>
    </reaction>
</comment>
<comment type="catalytic activity">
    <reaction>
        <text>L-histidyl-[ankyrin-repeat domain protein] + 2-oxoglutarate + O2 = (3S)-3-hydroxy-L-histidyl-[ankyrin-repeat domain protein] + succinate + CO2</text>
        <dbReference type="Rhea" id="RHEA:54264"/>
        <dbReference type="Rhea" id="RHEA-COMP:13836"/>
        <dbReference type="Rhea" id="RHEA-COMP:13837"/>
        <dbReference type="ChEBI" id="CHEBI:15379"/>
        <dbReference type="ChEBI" id="CHEBI:16526"/>
        <dbReference type="ChEBI" id="CHEBI:16810"/>
        <dbReference type="ChEBI" id="CHEBI:29979"/>
        <dbReference type="ChEBI" id="CHEBI:30031"/>
        <dbReference type="ChEBI" id="CHEBI:138021"/>
        <dbReference type="EC" id="1.14.11.n4"/>
    </reaction>
</comment>
<comment type="catalytic activity">
    <reaction>
        <text>L-asparaginyl-[ankyrin-repeat domain protein] + 2-oxoglutarate + O2 = (3S)-3-hydroxy-L-asparaginyl-[ankyrin-repeat domain protein] + succinate + CO2</text>
        <dbReference type="Rhea" id="RHEA:54272"/>
        <dbReference type="Rhea" id="RHEA-COMP:13838"/>
        <dbReference type="Rhea" id="RHEA-COMP:13839"/>
        <dbReference type="ChEBI" id="CHEBI:15379"/>
        <dbReference type="ChEBI" id="CHEBI:16526"/>
        <dbReference type="ChEBI" id="CHEBI:16810"/>
        <dbReference type="ChEBI" id="CHEBI:30031"/>
        <dbReference type="ChEBI" id="CHEBI:50347"/>
        <dbReference type="ChEBI" id="CHEBI:138107"/>
        <dbReference type="EC" id="1.14.11.n4"/>
    </reaction>
</comment>
<comment type="catalytic activity">
    <reaction>
        <text>L-aspartyl-[ankyrin-repeat domain protein] + 2-oxoglutarate + O2 = (3S)-3-hydroxy-L-aspartyl-[ankyrin-repeat domain protein] + succinate + CO2</text>
        <dbReference type="Rhea" id="RHEA:54280"/>
        <dbReference type="Rhea" id="RHEA-COMP:13843"/>
        <dbReference type="Rhea" id="RHEA-COMP:13844"/>
        <dbReference type="ChEBI" id="CHEBI:15379"/>
        <dbReference type="ChEBI" id="CHEBI:16526"/>
        <dbReference type="ChEBI" id="CHEBI:16810"/>
        <dbReference type="ChEBI" id="CHEBI:29961"/>
        <dbReference type="ChEBI" id="CHEBI:30031"/>
        <dbReference type="ChEBI" id="CHEBI:138111"/>
        <dbReference type="EC" id="1.14.11.n4"/>
    </reaction>
</comment>
<comment type="cofactor">
    <cofactor evidence="1">
        <name>Fe(2+)</name>
        <dbReference type="ChEBI" id="CHEBI:29033"/>
    </cofactor>
</comment>
<comment type="subunit">
    <text evidence="1">Homodimer; homodimerization is essential for catalytic activity.</text>
</comment>
<comment type="subcellular location">
    <subcellularLocation>
        <location evidence="1">Nucleus</location>
    </subcellularLocation>
    <subcellularLocation>
        <location evidence="1">Cytoplasm</location>
    </subcellularLocation>
    <subcellularLocation>
        <location evidence="1">Cytoplasm</location>
        <location evidence="1">Perinuclear region</location>
    </subcellularLocation>
</comment>
<name>HIF1N_DANRE</name>
<reference key="1">
    <citation type="journal article" date="2013" name="Nature">
        <title>The zebrafish reference genome sequence and its relationship to the human genome.</title>
        <authorList>
            <person name="Howe K."/>
            <person name="Clark M.D."/>
            <person name="Torroja C.F."/>
            <person name="Torrance J."/>
            <person name="Berthelot C."/>
            <person name="Muffato M."/>
            <person name="Collins J.E."/>
            <person name="Humphray S."/>
            <person name="McLaren K."/>
            <person name="Matthews L."/>
            <person name="McLaren S."/>
            <person name="Sealy I."/>
            <person name="Caccamo M."/>
            <person name="Churcher C."/>
            <person name="Scott C."/>
            <person name="Barrett J.C."/>
            <person name="Koch R."/>
            <person name="Rauch G.J."/>
            <person name="White S."/>
            <person name="Chow W."/>
            <person name="Kilian B."/>
            <person name="Quintais L.T."/>
            <person name="Guerra-Assuncao J.A."/>
            <person name="Zhou Y."/>
            <person name="Gu Y."/>
            <person name="Yen J."/>
            <person name="Vogel J.H."/>
            <person name="Eyre T."/>
            <person name="Redmond S."/>
            <person name="Banerjee R."/>
            <person name="Chi J."/>
            <person name="Fu B."/>
            <person name="Langley E."/>
            <person name="Maguire S.F."/>
            <person name="Laird G.K."/>
            <person name="Lloyd D."/>
            <person name="Kenyon E."/>
            <person name="Donaldson S."/>
            <person name="Sehra H."/>
            <person name="Almeida-King J."/>
            <person name="Loveland J."/>
            <person name="Trevanion S."/>
            <person name="Jones M."/>
            <person name="Quail M."/>
            <person name="Willey D."/>
            <person name="Hunt A."/>
            <person name="Burton J."/>
            <person name="Sims S."/>
            <person name="McLay K."/>
            <person name="Plumb B."/>
            <person name="Davis J."/>
            <person name="Clee C."/>
            <person name="Oliver K."/>
            <person name="Clark R."/>
            <person name="Riddle C."/>
            <person name="Elliot D."/>
            <person name="Threadgold G."/>
            <person name="Harden G."/>
            <person name="Ware D."/>
            <person name="Begum S."/>
            <person name="Mortimore B."/>
            <person name="Kerry G."/>
            <person name="Heath P."/>
            <person name="Phillimore B."/>
            <person name="Tracey A."/>
            <person name="Corby N."/>
            <person name="Dunn M."/>
            <person name="Johnson C."/>
            <person name="Wood J."/>
            <person name="Clark S."/>
            <person name="Pelan S."/>
            <person name="Griffiths G."/>
            <person name="Smith M."/>
            <person name="Glithero R."/>
            <person name="Howden P."/>
            <person name="Barker N."/>
            <person name="Lloyd C."/>
            <person name="Stevens C."/>
            <person name="Harley J."/>
            <person name="Holt K."/>
            <person name="Panagiotidis G."/>
            <person name="Lovell J."/>
            <person name="Beasley H."/>
            <person name="Henderson C."/>
            <person name="Gordon D."/>
            <person name="Auger K."/>
            <person name="Wright D."/>
            <person name="Collins J."/>
            <person name="Raisen C."/>
            <person name="Dyer L."/>
            <person name="Leung K."/>
            <person name="Robertson L."/>
            <person name="Ambridge K."/>
            <person name="Leongamornlert D."/>
            <person name="McGuire S."/>
            <person name="Gilderthorp R."/>
            <person name="Griffiths C."/>
            <person name="Manthravadi D."/>
            <person name="Nichol S."/>
            <person name="Barker G."/>
            <person name="Whitehead S."/>
            <person name="Kay M."/>
            <person name="Brown J."/>
            <person name="Murnane C."/>
            <person name="Gray E."/>
            <person name="Humphries M."/>
            <person name="Sycamore N."/>
            <person name="Barker D."/>
            <person name="Saunders D."/>
            <person name="Wallis J."/>
            <person name="Babbage A."/>
            <person name="Hammond S."/>
            <person name="Mashreghi-Mohammadi M."/>
            <person name="Barr L."/>
            <person name="Martin S."/>
            <person name="Wray P."/>
            <person name="Ellington A."/>
            <person name="Matthews N."/>
            <person name="Ellwood M."/>
            <person name="Woodmansey R."/>
            <person name="Clark G."/>
            <person name="Cooper J."/>
            <person name="Tromans A."/>
            <person name="Grafham D."/>
            <person name="Skuce C."/>
            <person name="Pandian R."/>
            <person name="Andrews R."/>
            <person name="Harrison E."/>
            <person name="Kimberley A."/>
            <person name="Garnett J."/>
            <person name="Fosker N."/>
            <person name="Hall R."/>
            <person name="Garner P."/>
            <person name="Kelly D."/>
            <person name="Bird C."/>
            <person name="Palmer S."/>
            <person name="Gehring I."/>
            <person name="Berger A."/>
            <person name="Dooley C.M."/>
            <person name="Ersan-Urun Z."/>
            <person name="Eser C."/>
            <person name="Geiger H."/>
            <person name="Geisler M."/>
            <person name="Karotki L."/>
            <person name="Kirn A."/>
            <person name="Konantz J."/>
            <person name="Konantz M."/>
            <person name="Oberlander M."/>
            <person name="Rudolph-Geiger S."/>
            <person name="Teucke M."/>
            <person name="Lanz C."/>
            <person name="Raddatz G."/>
            <person name="Osoegawa K."/>
            <person name="Zhu B."/>
            <person name="Rapp A."/>
            <person name="Widaa S."/>
            <person name="Langford C."/>
            <person name="Yang F."/>
            <person name="Schuster S.C."/>
            <person name="Carter N.P."/>
            <person name="Harrow J."/>
            <person name="Ning Z."/>
            <person name="Herrero J."/>
            <person name="Searle S.M."/>
            <person name="Enright A."/>
            <person name="Geisler R."/>
            <person name="Plasterk R.H."/>
            <person name="Lee C."/>
            <person name="Westerfield M."/>
            <person name="de Jong P.J."/>
            <person name="Zon L.I."/>
            <person name="Postlethwait J.H."/>
            <person name="Nusslein-Volhard C."/>
            <person name="Hubbard T.J."/>
            <person name="Roest Crollius H."/>
            <person name="Rogers J."/>
            <person name="Stemple D.L."/>
        </authorList>
    </citation>
    <scope>NUCLEOTIDE SEQUENCE [LARGE SCALE GENOMIC DNA]</scope>
    <source>
        <strain>Tuebingen</strain>
    </source>
</reference>
<reference key="2">
    <citation type="submission" date="2003-01" db="EMBL/GenBank/DDBJ databases">
        <authorList>
            <consortium name="NIH - Zebrafish Gene Collection (ZGC) project"/>
        </authorList>
    </citation>
    <scope>NUCLEOTIDE SEQUENCE [LARGE SCALE MRNA]</scope>
    <source>
        <strain>AB</strain>
    </source>
</reference>
<proteinExistence type="evidence at transcript level"/>
<evidence type="ECO:0000250" key="1">
    <source>
        <dbReference type="UniProtKB" id="Q9NWT6"/>
    </source>
</evidence>
<evidence type="ECO:0000255" key="2">
    <source>
        <dbReference type="PROSITE-ProRule" id="PRU00538"/>
    </source>
</evidence>
<evidence type="ECO:0000305" key="3"/>
<keyword id="KW-0007">Acetylation</keyword>
<keyword id="KW-0963">Cytoplasm</keyword>
<keyword id="KW-0223">Dioxygenase</keyword>
<keyword id="KW-0408">Iron</keyword>
<keyword id="KW-0479">Metal-binding</keyword>
<keyword id="KW-0539">Nucleus</keyword>
<keyword id="KW-0560">Oxidoreductase</keyword>
<keyword id="KW-1185">Reference proteome</keyword>
<keyword id="KW-0804">Transcription</keyword>
<keyword id="KW-0805">Transcription regulation</keyword>
<gene>
    <name type="primary">hif1an</name>
    <name type="ORF">si:rp71-68n3.1</name>
</gene>